<protein>
    <recommendedName>
        <fullName evidence="1">Thiazole synthase</fullName>
        <ecNumber evidence="1">2.8.1.10</ecNumber>
    </recommendedName>
</protein>
<reference key="1">
    <citation type="journal article" date="2005" name="DNA Res.">
        <title>The complete plastid genome sequence of the haptophyte Emiliania huxleyi: a comparison to other plastid genomes.</title>
        <authorList>
            <person name="Sanchez-Puerta M.V."/>
            <person name="Bachvaroff T.R."/>
            <person name="Delwiche C.F."/>
        </authorList>
    </citation>
    <scope>NUCLEOTIDE SEQUENCE [LARGE SCALE GENOMIC DNA]</scope>
    <source>
        <strain>CCMP373 / CSIRO-CS-57 / BT6</strain>
    </source>
</reference>
<proteinExistence type="inferred from homology"/>
<gene>
    <name evidence="1" type="primary">thiG</name>
</gene>
<feature type="chain" id="PRO_0000276564" description="Thiazole synthase">
    <location>
        <begin position="1"/>
        <end position="277"/>
    </location>
</feature>
<feature type="active site" description="Schiff-base intermediate with DXP" evidence="1">
    <location>
        <position position="118"/>
    </location>
</feature>
<feature type="binding site" evidence="1">
    <location>
        <position position="179"/>
    </location>
    <ligand>
        <name>1-deoxy-D-xylulose 5-phosphate</name>
        <dbReference type="ChEBI" id="CHEBI:57792"/>
    </ligand>
</feature>
<feature type="binding site" evidence="1">
    <location>
        <begin position="205"/>
        <end position="206"/>
    </location>
    <ligand>
        <name>1-deoxy-D-xylulose 5-phosphate</name>
        <dbReference type="ChEBI" id="CHEBI:57792"/>
    </ligand>
</feature>
<feature type="binding site" evidence="1">
    <location>
        <begin position="227"/>
        <end position="228"/>
    </location>
    <ligand>
        <name>1-deoxy-D-xylulose 5-phosphate</name>
        <dbReference type="ChEBI" id="CHEBI:57792"/>
    </ligand>
</feature>
<organism>
    <name type="scientific">Emiliania huxleyi</name>
    <name type="common">Coccolithophore</name>
    <name type="synonym">Pontosphaera huxleyi</name>
    <dbReference type="NCBI Taxonomy" id="2903"/>
    <lineage>
        <taxon>Eukaryota</taxon>
        <taxon>Haptista</taxon>
        <taxon>Haptophyta</taxon>
        <taxon>Prymnesiophyceae</taxon>
        <taxon>Isochrysidales</taxon>
        <taxon>Noelaerhabdaceae</taxon>
        <taxon>Emiliania</taxon>
    </lineage>
</organism>
<geneLocation type="chloroplast"/>
<accession>Q4G387</accession>
<comment type="function">
    <text evidence="1">Catalyzes the rearrangement of 1-deoxy-D-xylulose 5-phosphate (DXP) to produce the thiazole phosphate moiety of thiamine. Sulfur is provided by the thiocarboxylate moiety of the carrier protein ThiS. In vitro, sulfur can be provided by H(2)S.</text>
</comment>
<comment type="catalytic activity">
    <reaction evidence="1">
        <text>[ThiS sulfur-carrier protein]-C-terminal-Gly-aminoethanethioate + 2-iminoacetate + 1-deoxy-D-xylulose 5-phosphate = [ThiS sulfur-carrier protein]-C-terminal Gly-Gly + 2-[(2R,5Z)-2-carboxy-4-methylthiazol-5(2H)-ylidene]ethyl phosphate + 2 H2O + H(+)</text>
        <dbReference type="Rhea" id="RHEA:26297"/>
        <dbReference type="Rhea" id="RHEA-COMP:12909"/>
        <dbReference type="Rhea" id="RHEA-COMP:19908"/>
        <dbReference type="ChEBI" id="CHEBI:15377"/>
        <dbReference type="ChEBI" id="CHEBI:15378"/>
        <dbReference type="ChEBI" id="CHEBI:57792"/>
        <dbReference type="ChEBI" id="CHEBI:62899"/>
        <dbReference type="ChEBI" id="CHEBI:77846"/>
        <dbReference type="ChEBI" id="CHEBI:90778"/>
        <dbReference type="ChEBI" id="CHEBI:232372"/>
        <dbReference type="EC" id="2.8.1.10"/>
    </reaction>
</comment>
<comment type="pathway">
    <text evidence="1">Cofactor biosynthesis; thiamine diphosphate biosynthesis.</text>
</comment>
<comment type="subunit">
    <text evidence="1">Homotetramer. Forms heterodimers with either ThiH or ThiS.</text>
</comment>
<comment type="subcellular location">
    <subcellularLocation>
        <location>Plastid</location>
        <location>Chloroplast</location>
    </subcellularLocation>
</comment>
<comment type="similarity">
    <text evidence="1">Belongs to the ThiG family.</text>
</comment>
<sequence length="277" mass="29274">MTETFEMSPYQPVIDPLVIGERQFTSRLMLGTGKYKNLDEAKKSITASGCQILTVAVRRAQNSTIQSMGNLITGLDWSKIWLMPNTAGCQTAQEAIRVAFLGREITKNIGFENNNFTKLEVIPDPKYLLPDGLGTLLAAEYLVSKNFTVLPYINADPILAKQLENAGCATVMPLGSPIGSGQGLKNLSNIQIIIENANVPVIVDAGIGTPSQAAQAMEIGAGGVLANTAVAKAQNAPQMAYAMQLGVLAGRAAFQAGKIDAGKLAQPSSPIVGLSKK</sequence>
<evidence type="ECO:0000255" key="1">
    <source>
        <dbReference type="HAMAP-Rule" id="MF_00443"/>
    </source>
</evidence>
<keyword id="KW-0150">Chloroplast</keyword>
<keyword id="KW-0934">Plastid</keyword>
<keyword id="KW-0704">Schiff base</keyword>
<keyword id="KW-0784">Thiamine biosynthesis</keyword>
<keyword id="KW-0808">Transferase</keyword>
<dbReference type="EC" id="2.8.1.10" evidence="1"/>
<dbReference type="EMBL" id="AY741371">
    <property type="protein sequence ID" value="AAX13879.1"/>
    <property type="molecule type" value="Genomic_DNA"/>
</dbReference>
<dbReference type="RefSeq" id="YP_277380.1">
    <property type="nucleotide sequence ID" value="NC_007288.1"/>
</dbReference>
<dbReference type="SMR" id="Q4G387"/>
<dbReference type="STRING" id="2903.Q4G387"/>
<dbReference type="GeneID" id="3562464"/>
<dbReference type="UniPathway" id="UPA00060"/>
<dbReference type="GO" id="GO:0009507">
    <property type="term" value="C:chloroplast"/>
    <property type="evidence" value="ECO:0007669"/>
    <property type="project" value="UniProtKB-SubCell"/>
</dbReference>
<dbReference type="GO" id="GO:1990107">
    <property type="term" value="F:thiazole synthase activity"/>
    <property type="evidence" value="ECO:0007669"/>
    <property type="project" value="UniProtKB-EC"/>
</dbReference>
<dbReference type="GO" id="GO:0009229">
    <property type="term" value="P:thiamine diphosphate biosynthetic process"/>
    <property type="evidence" value="ECO:0007669"/>
    <property type="project" value="UniProtKB-UniRule"/>
</dbReference>
<dbReference type="CDD" id="cd04728">
    <property type="entry name" value="ThiG"/>
    <property type="match status" value="1"/>
</dbReference>
<dbReference type="Gene3D" id="3.20.20.70">
    <property type="entry name" value="Aldolase class I"/>
    <property type="match status" value="1"/>
</dbReference>
<dbReference type="HAMAP" id="MF_00443">
    <property type="entry name" value="ThiG"/>
    <property type="match status" value="1"/>
</dbReference>
<dbReference type="InterPro" id="IPR013785">
    <property type="entry name" value="Aldolase_TIM"/>
</dbReference>
<dbReference type="InterPro" id="IPR033983">
    <property type="entry name" value="Thiazole_synthase_ThiG"/>
</dbReference>
<dbReference type="InterPro" id="IPR008867">
    <property type="entry name" value="ThiG"/>
</dbReference>
<dbReference type="PANTHER" id="PTHR34266">
    <property type="entry name" value="THIAZOLE SYNTHASE"/>
    <property type="match status" value="1"/>
</dbReference>
<dbReference type="PANTHER" id="PTHR34266:SF2">
    <property type="entry name" value="THIAZOLE SYNTHASE"/>
    <property type="match status" value="1"/>
</dbReference>
<dbReference type="Pfam" id="PF05690">
    <property type="entry name" value="ThiG"/>
    <property type="match status" value="1"/>
</dbReference>
<dbReference type="SUPFAM" id="SSF110399">
    <property type="entry name" value="ThiG-like"/>
    <property type="match status" value="1"/>
</dbReference>
<name>THIG_EMIHU</name>